<accession>P38981</accession>
<evidence type="ECO:0000255" key="1">
    <source>
        <dbReference type="HAMAP-Rule" id="MF_03015"/>
    </source>
</evidence>
<evidence type="ECO:0000256" key="2">
    <source>
        <dbReference type="SAM" id="MobiDB-lite"/>
    </source>
</evidence>
<evidence type="ECO:0000305" key="3"/>
<proteinExistence type="evidence at transcript level"/>
<name>RSSA_URECA</name>
<organism>
    <name type="scientific">Urechis caupo</name>
    <name type="common">Innkeeper worm</name>
    <name type="synonym">Spoonworm</name>
    <dbReference type="NCBI Taxonomy" id="6431"/>
    <lineage>
        <taxon>Eukaryota</taxon>
        <taxon>Metazoa</taxon>
        <taxon>Spiralia</taxon>
        <taxon>Lophotrochozoa</taxon>
        <taxon>Annelida</taxon>
        <taxon>Polychaeta</taxon>
        <taxon>Echiura</taxon>
        <taxon>Xenopneusta</taxon>
        <taxon>Urechidae</taxon>
        <taxon>Urechis</taxon>
    </lineage>
</organism>
<protein>
    <recommendedName>
        <fullName evidence="1">Small ribosomal subunit protein uS2</fullName>
    </recommendedName>
    <alternativeName>
        <fullName evidence="3">40S ribosomal protein SA</fullName>
    </alternativeName>
    <alternativeName>
        <fullName>Laminin-binding protein p40</fullName>
        <shortName>LBP/p40</shortName>
    </alternativeName>
</protein>
<sequence>MSGSIDTLALKEEDVTKFLACASHLGANNVDFQMEQYVYKRRPDGTSIINVRKTWEKVLLAARAIAAIENPADICVISARPYGQRAVLKFAHYTGATPIAGRFTPGTFTNQIQTAFREPRLLVVTDPYTDHQPVTEASYVNIPVIALTNTDSPLKYVDIAIPCNNKSIHSVGLMWWMLAREVLRLRGTISREVPWEVMVDLFFYRDPEEAEKEAQAEQAAAEKDKAPKEEFTADQAFTAPGTEVSDWASEVPVAPVPILAGGVDAATTEDWSVPAQSDWTAPAANPANAAAAGAPAPAPAAATTTESWGGSGAENWG</sequence>
<comment type="function">
    <text evidence="1">Required for the assembly and/or stability of the 40S ribosomal subunit. Required for the processing of the 20S rRNA-precursor to mature 18S rRNA in a late step of the maturation of 40S ribosomal subunits.</text>
</comment>
<comment type="subunit">
    <text evidence="1">Component of the small ribosomal subunit. Mature ribosomes consist of a small (40S) and a large (60S) subunit. The 40S subunit contains about 33 different proteins and 1 molecule of RNA (18S). The 60S subunit contains about 49 different proteins and 3 molecules of RNA (28S, 5.8S and 5S). Interacts with ribosomal protein S21.</text>
</comment>
<comment type="subcellular location">
    <subcellularLocation>
        <location evidence="1">Cytoplasm</location>
    </subcellularLocation>
</comment>
<comment type="similarity">
    <text evidence="1">Belongs to the universal ribosomal protein uS2 family.</text>
</comment>
<feature type="chain" id="PRO_0000134364" description="Small ribosomal subunit protein uS2">
    <location>
        <begin position="1"/>
        <end position="317"/>
    </location>
</feature>
<feature type="region of interest" description="Disordered" evidence="2">
    <location>
        <begin position="277"/>
        <end position="317"/>
    </location>
</feature>
<feature type="compositionally biased region" description="Low complexity" evidence="2">
    <location>
        <begin position="281"/>
        <end position="302"/>
    </location>
</feature>
<keyword id="KW-0963">Cytoplasm</keyword>
<keyword id="KW-0687">Ribonucleoprotein</keyword>
<keyword id="KW-0689">Ribosomal protein</keyword>
<dbReference type="EMBL" id="U02370">
    <property type="protein sequence ID" value="AAA90978.1"/>
    <property type="molecule type" value="mRNA"/>
</dbReference>
<dbReference type="SMR" id="P38981"/>
<dbReference type="GO" id="GO:0022627">
    <property type="term" value="C:cytosolic small ribosomal subunit"/>
    <property type="evidence" value="ECO:0007669"/>
    <property type="project" value="UniProtKB-UniRule"/>
</dbReference>
<dbReference type="GO" id="GO:0003735">
    <property type="term" value="F:structural constituent of ribosome"/>
    <property type="evidence" value="ECO:0007669"/>
    <property type="project" value="UniProtKB-UniRule"/>
</dbReference>
<dbReference type="GO" id="GO:0000028">
    <property type="term" value="P:ribosomal small subunit assembly"/>
    <property type="evidence" value="ECO:0007669"/>
    <property type="project" value="UniProtKB-UniRule"/>
</dbReference>
<dbReference type="GO" id="GO:0006412">
    <property type="term" value="P:translation"/>
    <property type="evidence" value="ECO:0007669"/>
    <property type="project" value="UniProtKB-UniRule"/>
</dbReference>
<dbReference type="CDD" id="cd01425">
    <property type="entry name" value="RPS2"/>
    <property type="match status" value="1"/>
</dbReference>
<dbReference type="FunFam" id="3.40.50.10490:FF:000012">
    <property type="entry name" value="40S ribosomal protein SA"/>
    <property type="match status" value="1"/>
</dbReference>
<dbReference type="Gene3D" id="3.40.50.10490">
    <property type="entry name" value="Glucose-6-phosphate isomerase like protein, domain 1"/>
    <property type="match status" value="1"/>
</dbReference>
<dbReference type="HAMAP" id="MF_03015">
    <property type="entry name" value="Ribosomal_S2_euk"/>
    <property type="match status" value="1"/>
</dbReference>
<dbReference type="InterPro" id="IPR001865">
    <property type="entry name" value="Ribosomal_uS2"/>
</dbReference>
<dbReference type="InterPro" id="IPR032281">
    <property type="entry name" value="Ribosomal_uS2_C"/>
</dbReference>
<dbReference type="InterPro" id="IPR018130">
    <property type="entry name" value="Ribosomal_uS2_CS"/>
</dbReference>
<dbReference type="InterPro" id="IPR027498">
    <property type="entry name" value="Ribosomal_uS2_euk"/>
</dbReference>
<dbReference type="InterPro" id="IPR005707">
    <property type="entry name" value="Ribosomal_uS2_euk/arc"/>
</dbReference>
<dbReference type="InterPro" id="IPR023591">
    <property type="entry name" value="Ribosomal_uS2_flav_dom_sf"/>
</dbReference>
<dbReference type="NCBIfam" id="TIGR01012">
    <property type="entry name" value="uS2_euk_arch"/>
    <property type="match status" value="1"/>
</dbReference>
<dbReference type="PANTHER" id="PTHR11489">
    <property type="entry name" value="40S RIBOSOMAL PROTEIN SA"/>
    <property type="match status" value="1"/>
</dbReference>
<dbReference type="Pfam" id="PF16122">
    <property type="entry name" value="40S_SA_C"/>
    <property type="match status" value="1"/>
</dbReference>
<dbReference type="Pfam" id="PF00318">
    <property type="entry name" value="Ribosomal_S2"/>
    <property type="match status" value="2"/>
</dbReference>
<dbReference type="PRINTS" id="PR00395">
    <property type="entry name" value="RIBOSOMALS2"/>
</dbReference>
<dbReference type="SUPFAM" id="SSF52313">
    <property type="entry name" value="Ribosomal protein S2"/>
    <property type="match status" value="1"/>
</dbReference>
<dbReference type="PROSITE" id="PS00962">
    <property type="entry name" value="RIBOSOMAL_S2_1"/>
    <property type="match status" value="1"/>
</dbReference>
<dbReference type="PROSITE" id="PS00963">
    <property type="entry name" value="RIBOSOMAL_S2_2"/>
    <property type="match status" value="1"/>
</dbReference>
<reference key="1">
    <citation type="journal article" date="1995" name="J. Cell Sci.">
        <title>A protein similar to the 67 kDa laminin binding protein and p40 is probably a component of the translational machinery in Urechis caupo oocytes and embryos.</title>
        <authorList>
            <person name="Rosenthal E.T."/>
            <person name="Wordeman L."/>
        </authorList>
    </citation>
    <scope>NUCLEOTIDE SEQUENCE [MRNA]</scope>
</reference>